<proteinExistence type="evidence at transcript level"/>
<reference key="1">
    <citation type="journal article" date="2003" name="Plant Physiol.">
        <title>Identification and expression analysis of a gene encoding a bacterial-type phosphoenolpyruvate carboxylase from Arabidopsis and rice.</title>
        <authorList>
            <person name="Sanchez R."/>
            <person name="Cejudo F.J."/>
        </authorList>
    </citation>
    <scope>NUCLEOTIDE SEQUENCE [MRNA]</scope>
    <scope>TISSUE SPECIFICITY</scope>
    <scope>GENE FAMILY</scope>
    <scope>NOMENCLATURE</scope>
    <source>
        <strain>cv. Columbia</strain>
    </source>
</reference>
<reference key="2">
    <citation type="journal article" date="2000" name="Nature">
        <title>Sequence and analysis of chromosome 1 of the plant Arabidopsis thaliana.</title>
        <authorList>
            <person name="Theologis A."/>
            <person name="Ecker J.R."/>
            <person name="Palm C.J."/>
            <person name="Federspiel N.A."/>
            <person name="Kaul S."/>
            <person name="White O."/>
            <person name="Alonso J."/>
            <person name="Altafi H."/>
            <person name="Araujo R."/>
            <person name="Bowman C.L."/>
            <person name="Brooks S.Y."/>
            <person name="Buehler E."/>
            <person name="Chan A."/>
            <person name="Chao Q."/>
            <person name="Chen H."/>
            <person name="Cheuk R.F."/>
            <person name="Chin C.W."/>
            <person name="Chung M.K."/>
            <person name="Conn L."/>
            <person name="Conway A.B."/>
            <person name="Conway A.R."/>
            <person name="Creasy T.H."/>
            <person name="Dewar K."/>
            <person name="Dunn P."/>
            <person name="Etgu P."/>
            <person name="Feldblyum T.V."/>
            <person name="Feng J.-D."/>
            <person name="Fong B."/>
            <person name="Fujii C.Y."/>
            <person name="Gill J.E."/>
            <person name="Goldsmith A.D."/>
            <person name="Haas B."/>
            <person name="Hansen N.F."/>
            <person name="Hughes B."/>
            <person name="Huizar L."/>
            <person name="Hunter J.L."/>
            <person name="Jenkins J."/>
            <person name="Johnson-Hopson C."/>
            <person name="Khan S."/>
            <person name="Khaykin E."/>
            <person name="Kim C.J."/>
            <person name="Koo H.L."/>
            <person name="Kremenetskaia I."/>
            <person name="Kurtz D.B."/>
            <person name="Kwan A."/>
            <person name="Lam B."/>
            <person name="Langin-Hooper S."/>
            <person name="Lee A."/>
            <person name="Lee J.M."/>
            <person name="Lenz C.A."/>
            <person name="Li J.H."/>
            <person name="Li Y.-P."/>
            <person name="Lin X."/>
            <person name="Liu S.X."/>
            <person name="Liu Z.A."/>
            <person name="Luros J.S."/>
            <person name="Maiti R."/>
            <person name="Marziali A."/>
            <person name="Militscher J."/>
            <person name="Miranda M."/>
            <person name="Nguyen M."/>
            <person name="Nierman W.C."/>
            <person name="Osborne B.I."/>
            <person name="Pai G."/>
            <person name="Peterson J."/>
            <person name="Pham P.K."/>
            <person name="Rizzo M."/>
            <person name="Rooney T."/>
            <person name="Rowley D."/>
            <person name="Sakano H."/>
            <person name="Salzberg S.L."/>
            <person name="Schwartz J.R."/>
            <person name="Shinn P."/>
            <person name="Southwick A.M."/>
            <person name="Sun H."/>
            <person name="Tallon L.J."/>
            <person name="Tambunga G."/>
            <person name="Toriumi M.J."/>
            <person name="Town C.D."/>
            <person name="Utterback T."/>
            <person name="Van Aken S."/>
            <person name="Vaysberg M."/>
            <person name="Vysotskaia V.S."/>
            <person name="Walker M."/>
            <person name="Wu D."/>
            <person name="Yu G."/>
            <person name="Fraser C.M."/>
            <person name="Venter J.C."/>
            <person name="Davis R.W."/>
        </authorList>
    </citation>
    <scope>NUCLEOTIDE SEQUENCE [LARGE SCALE GENOMIC DNA]</scope>
    <source>
        <strain>cv. Columbia</strain>
    </source>
</reference>
<reference key="3">
    <citation type="journal article" date="2017" name="Plant J.">
        <title>Araport11: a complete reannotation of the Arabidopsis thaliana reference genome.</title>
        <authorList>
            <person name="Cheng C.Y."/>
            <person name="Krishnakumar V."/>
            <person name="Chan A.P."/>
            <person name="Thibaud-Nissen F."/>
            <person name="Schobel S."/>
            <person name="Town C.D."/>
        </authorList>
    </citation>
    <scope>GENOME REANNOTATION</scope>
    <source>
        <strain>cv. Columbia</strain>
    </source>
</reference>
<gene>
    <name type="primary">PPC4</name>
    <name type="ordered locus">At1g68750</name>
    <name type="ORF">F14K14.14</name>
    <name type="ORF">F24J5.1</name>
</gene>
<comment type="function">
    <text>Through the carboxylation of phosphoenolpyruvate (PEP) it forms oxaloacetate, a four-carbon dicarboxylic acid source for the tricarboxylic acid cycle.</text>
</comment>
<comment type="catalytic activity">
    <reaction>
        <text>oxaloacetate + phosphate = phosphoenolpyruvate + hydrogencarbonate</text>
        <dbReference type="Rhea" id="RHEA:28370"/>
        <dbReference type="ChEBI" id="CHEBI:16452"/>
        <dbReference type="ChEBI" id="CHEBI:17544"/>
        <dbReference type="ChEBI" id="CHEBI:43474"/>
        <dbReference type="ChEBI" id="CHEBI:58702"/>
        <dbReference type="EC" id="4.1.1.31"/>
    </reaction>
</comment>
<comment type="cofactor">
    <cofactor evidence="1">
        <name>Mg(2+)</name>
        <dbReference type="ChEBI" id="CHEBI:18420"/>
    </cofactor>
</comment>
<comment type="subunit">
    <text evidence="1">Homotetramer.</text>
</comment>
<comment type="subcellular location">
    <subcellularLocation>
        <location evidence="1">Cytoplasm</location>
    </subcellularLocation>
</comment>
<comment type="tissue specificity">
    <text evidence="3">Expressed at low levels in flowers and siliques, and detectable in roots.</text>
</comment>
<comment type="similarity">
    <text evidence="4">Belongs to the PEPCase type 1 family.</text>
</comment>
<comment type="sequence caution" evidence="4">
    <conflict type="erroneous gene model prediction">
        <sequence resource="EMBL-CDS" id="AAD49968"/>
    </conflict>
</comment>
<comment type="sequence caution" evidence="4">
    <conflict type="erroneous gene model prediction">
        <sequence resource="EMBL-CDS" id="AAG52040"/>
    </conflict>
</comment>
<organism>
    <name type="scientific">Arabidopsis thaliana</name>
    <name type="common">Mouse-ear cress</name>
    <dbReference type="NCBI Taxonomy" id="3702"/>
    <lineage>
        <taxon>Eukaryota</taxon>
        <taxon>Viridiplantae</taxon>
        <taxon>Streptophyta</taxon>
        <taxon>Embryophyta</taxon>
        <taxon>Tracheophyta</taxon>
        <taxon>Spermatophyta</taxon>
        <taxon>Magnoliopsida</taxon>
        <taxon>eudicotyledons</taxon>
        <taxon>Gunneridae</taxon>
        <taxon>Pentapetalae</taxon>
        <taxon>rosids</taxon>
        <taxon>malvids</taxon>
        <taxon>Brassicales</taxon>
        <taxon>Brassicaceae</taxon>
        <taxon>Camelineae</taxon>
        <taxon>Arabidopsis</taxon>
    </lineage>
</organism>
<dbReference type="EC" id="4.1.1.31"/>
<dbReference type="EMBL" id="AJ532903">
    <property type="protein sequence ID" value="CAD58727.1"/>
    <property type="molecule type" value="mRNA"/>
</dbReference>
<dbReference type="EMBL" id="AC008075">
    <property type="protein sequence ID" value="AAD49968.1"/>
    <property type="status" value="ALT_SEQ"/>
    <property type="molecule type" value="Genomic_DNA"/>
</dbReference>
<dbReference type="EMBL" id="AC011914">
    <property type="protein sequence ID" value="AAG52040.1"/>
    <property type="status" value="ALT_SEQ"/>
    <property type="molecule type" value="Genomic_DNA"/>
</dbReference>
<dbReference type="EMBL" id="CP002684">
    <property type="protein sequence ID" value="AEE34835.1"/>
    <property type="molecule type" value="Genomic_DNA"/>
</dbReference>
<dbReference type="PIR" id="C96712">
    <property type="entry name" value="C96712"/>
</dbReference>
<dbReference type="RefSeq" id="NP_177043.2">
    <property type="nucleotide sequence ID" value="NM_105548.5"/>
</dbReference>
<dbReference type="SMR" id="Q8GVE8"/>
<dbReference type="BioGRID" id="28427">
    <property type="interactions" value="6"/>
</dbReference>
<dbReference type="FunCoup" id="Q8GVE8">
    <property type="interactions" value="302"/>
</dbReference>
<dbReference type="STRING" id="3702.Q8GVE8"/>
<dbReference type="iPTMnet" id="Q8GVE8"/>
<dbReference type="PaxDb" id="3702-AT1G68750.1"/>
<dbReference type="ProteomicsDB" id="240315"/>
<dbReference type="EnsemblPlants" id="AT1G68750.1">
    <property type="protein sequence ID" value="AT1G68750.1"/>
    <property type="gene ID" value="AT1G68750"/>
</dbReference>
<dbReference type="GeneID" id="843206"/>
<dbReference type="Gramene" id="AT1G68750.1">
    <property type="protein sequence ID" value="AT1G68750.1"/>
    <property type="gene ID" value="AT1G68750"/>
</dbReference>
<dbReference type="KEGG" id="ath:AT1G68750"/>
<dbReference type="Araport" id="AT1G68750"/>
<dbReference type="TAIR" id="AT1G68750">
    <property type="gene designation" value="PPC4"/>
</dbReference>
<dbReference type="eggNOG" id="ENOG502QPVS">
    <property type="taxonomic scope" value="Eukaryota"/>
</dbReference>
<dbReference type="HOGENOM" id="CLU_006557_2_0_1"/>
<dbReference type="InParanoid" id="Q8GVE8"/>
<dbReference type="OMA" id="TKHYDEQ"/>
<dbReference type="OrthoDB" id="1365747at2759"/>
<dbReference type="PhylomeDB" id="Q8GVE8"/>
<dbReference type="BioCyc" id="ARA:AT1G68750-MONOMER"/>
<dbReference type="BRENDA" id="4.1.1.31">
    <property type="organism ID" value="399"/>
</dbReference>
<dbReference type="PRO" id="PR:Q8GVE8"/>
<dbReference type="Proteomes" id="UP000006548">
    <property type="component" value="Chromosome 1"/>
</dbReference>
<dbReference type="ExpressionAtlas" id="Q8GVE8">
    <property type="expression patterns" value="baseline and differential"/>
</dbReference>
<dbReference type="GO" id="GO:0005737">
    <property type="term" value="C:cytoplasm"/>
    <property type="evidence" value="ECO:0007669"/>
    <property type="project" value="UniProtKB-SubCell"/>
</dbReference>
<dbReference type="GO" id="GO:0008964">
    <property type="term" value="F:phosphoenolpyruvate carboxylase activity"/>
    <property type="evidence" value="ECO:0000250"/>
    <property type="project" value="TAIR"/>
</dbReference>
<dbReference type="GO" id="GO:0015977">
    <property type="term" value="P:carbon fixation"/>
    <property type="evidence" value="ECO:0007669"/>
    <property type="project" value="UniProtKB-KW"/>
</dbReference>
<dbReference type="GO" id="GO:0015979">
    <property type="term" value="P:photosynthesis"/>
    <property type="evidence" value="ECO:0007669"/>
    <property type="project" value="UniProtKB-KW"/>
</dbReference>
<dbReference type="GO" id="GO:0006099">
    <property type="term" value="P:tricarboxylic acid cycle"/>
    <property type="evidence" value="ECO:0000250"/>
    <property type="project" value="TAIR"/>
</dbReference>
<dbReference type="FunFam" id="1.20.1440.90:FF:000001">
    <property type="entry name" value="Phosphoenolpyruvate carboxylase 1"/>
    <property type="match status" value="1"/>
</dbReference>
<dbReference type="Gene3D" id="1.20.1440.90">
    <property type="entry name" value="Phosphoenolpyruvate/pyruvate domain"/>
    <property type="match status" value="1"/>
</dbReference>
<dbReference type="HAMAP" id="MF_00595">
    <property type="entry name" value="PEPcase_type1"/>
    <property type="match status" value="1"/>
</dbReference>
<dbReference type="InterPro" id="IPR021135">
    <property type="entry name" value="PEP_COase"/>
</dbReference>
<dbReference type="InterPro" id="IPR022805">
    <property type="entry name" value="PEP_COase_bac/pln-type"/>
</dbReference>
<dbReference type="InterPro" id="IPR018129">
    <property type="entry name" value="PEP_COase_Lys_AS"/>
</dbReference>
<dbReference type="InterPro" id="IPR033129">
    <property type="entry name" value="PEPCASE_His_AS"/>
</dbReference>
<dbReference type="InterPro" id="IPR015813">
    <property type="entry name" value="Pyrv/PenolPyrv_kinase-like_dom"/>
</dbReference>
<dbReference type="PANTHER" id="PTHR30523">
    <property type="entry name" value="PHOSPHOENOLPYRUVATE CARBOXYLASE"/>
    <property type="match status" value="1"/>
</dbReference>
<dbReference type="PANTHER" id="PTHR30523:SF6">
    <property type="entry name" value="PHOSPHOENOLPYRUVATE CARBOXYLASE"/>
    <property type="match status" value="1"/>
</dbReference>
<dbReference type="Pfam" id="PF00311">
    <property type="entry name" value="PEPcase"/>
    <property type="match status" value="2"/>
</dbReference>
<dbReference type="PRINTS" id="PR00150">
    <property type="entry name" value="PEPCARBXLASE"/>
</dbReference>
<dbReference type="SUPFAM" id="SSF51621">
    <property type="entry name" value="Phosphoenolpyruvate/pyruvate domain"/>
    <property type="match status" value="1"/>
</dbReference>
<dbReference type="PROSITE" id="PS00781">
    <property type="entry name" value="PEPCASE_1"/>
    <property type="match status" value="1"/>
</dbReference>
<dbReference type="PROSITE" id="PS00393">
    <property type="entry name" value="PEPCASE_2"/>
    <property type="match status" value="1"/>
</dbReference>
<keyword id="KW-0120">Carbon dioxide fixation</keyword>
<keyword id="KW-0963">Cytoplasm</keyword>
<keyword id="KW-0456">Lyase</keyword>
<keyword id="KW-0460">Magnesium</keyword>
<keyword id="KW-0602">Photosynthesis</keyword>
<keyword id="KW-1185">Reference proteome</keyword>
<name>CAPP4_ARATH</name>
<protein>
    <recommendedName>
        <fullName>Phosphoenolpyruvate carboxylase 4</fullName>
        <shortName>AtPPC4</shortName>
        <shortName>PEPC 4</shortName>
        <shortName>PEPCase 4</shortName>
        <ecNumber>4.1.1.31</ecNumber>
    </recommendedName>
</protein>
<feature type="chain" id="PRO_0000166660" description="Phosphoenolpyruvate carboxylase 4">
    <location>
        <begin position="1"/>
        <end position="1032"/>
    </location>
</feature>
<feature type="region of interest" description="Disordered" evidence="2">
    <location>
        <begin position="377"/>
        <end position="407"/>
    </location>
</feature>
<feature type="compositionally biased region" description="Polar residues" evidence="2">
    <location>
        <begin position="398"/>
        <end position="407"/>
    </location>
</feature>
<feature type="active site" evidence="1">
    <location>
        <position position="154"/>
    </location>
</feature>
<feature type="active site" evidence="1">
    <location>
        <position position="699"/>
    </location>
</feature>
<accession>Q8GVE8</accession>
<accession>Q9CA39</accession>
<accession>Q9SX35</accession>
<evidence type="ECO:0000250" key="1"/>
<evidence type="ECO:0000256" key="2">
    <source>
        <dbReference type="SAM" id="MobiDB-lite"/>
    </source>
</evidence>
<evidence type="ECO:0000269" key="3">
    <source>
    </source>
</evidence>
<evidence type="ECO:0000305" key="4"/>
<sequence>MTDTTDDIAEEISFQSFEDDCKLLGSLFHDVLQREVGNPFMEKVERIRILAQSALNLRMAGIEDTANLLEKQLTSEISKMPLEEALTLARTFTHSLNLMGIADTHHRMHKVHNVTQLARSCDDIFSQLLQSGISPDELYKTVCKQEVEIVLTAHPTQINRRTLQYKHIRIAHLLEYNTRSDLSVEDRETLIEDLVREITSLWQTDELRRQKPTPVDEARAGLNIVEQSLWKAVPQYLRRVSNSLKKFTGKPLPLTCTPMKFGSWMGGDRDGNPNVTAKVTKEVSLLSRWMAIDLYIREVDSLRFELSTDRCSDRFSRLADKILEKDYDRGKSNFQKQQSSSCLPTQLPARAHLPACIDFGESRHTKFEIATTDYMPPNLQKQNEQDFSESDWEKIDNGSRSGLTSRGSFSSTSQLLLQRKLFEESQVGKTSFQKLLEPPPLKRAGSAPYRIVLGEVKEKLVKTRRLLELLIEGLPCEYDPKNSYETSDQLLEPLLLCYESLQSSGARVLADGRLADLIRRVSTFGMVLVKLDLRQEAARHSEALDAITTYLDMGTYSEWDEEKKLEFLTRELKGKRPLVPQCIKVGPDVKEVLDTFRVAAELGSESLGAYVISMASNASDVLAVELLQKDARLALTSEHGKPCPGGTLRVVPLFETVNDLRAAGPSIRKLLSIDWYREHIQKNHNGHQEVMVGYSDSGKDAGRFTAAWELYKAQENVVAACNEFGIKITLFHGRGGSIGRGGGPTYLAIQSQPPGSVMGSLRSTEQGEMVQAKFGIPQTAVRQLEVYTTAVLLATLKPPQPPREEKWRNLMEEISGISCQHYRSTVYENPEFLSYFHEATPQAELGFLNIGSRPTRRKSSSGIGHLRAIPWVFAWTQTRFVLPAWLGVGAGLKGVSEKGHADDLKEMYKEWPFFQSTLELIEMVLAKADIPMTKHYDEQLVSEKRRGLGTELRKELMTTEKYVLVISGHEKLLQDNKSLKKLIDSRLPYLNAMNMLQVEILKRLRRDEDNNKLRDALLITINGIAAGMRNTG</sequence>